<comment type="function">
    <text>May be involved in the final steps of mitochondrial differentiation within the flagellum.</text>
</comment>
<comment type="subcellular location">
    <subcellularLocation>
        <location evidence="3">Nucleus</location>
    </subcellularLocation>
    <subcellularLocation>
        <location evidence="3">Mitochondrion</location>
    </subcellularLocation>
    <text>Predominantly nuclear. Some fraction is associated with mitochondria.</text>
</comment>
<comment type="alternative products">
    <event type="alternative splicing"/>
    <isoform>
        <id>O01352-1</id>
        <name>A</name>
        <sequence type="displayed"/>
    </isoform>
    <isoform>
        <id>O01352-2</id>
        <name>B</name>
        <sequence type="described" ref="VSP_009364"/>
    </isoform>
</comment>
<comment type="tissue specificity">
    <text evidence="3">Expression limited to post-meiotic male germ cells. Expressed in elongated spermatids during individualization and in finally elongated nuclei of spermatids. After completion of nuclear shaping it is no longer expressed in the sperm heads with the onset of individualization.</text>
</comment>
<comment type="developmental stage">
    <text>Expressed post-meiotically.</text>
</comment>
<accession>O01352</accession>
<accession>Q8INS3</accession>
<accession>Q9VI50</accession>
<feature type="chain" id="PRO_0000079924" description="Sperm-specific protein Don juan">
    <location>
        <begin position="1"/>
        <end position="248"/>
    </location>
</feature>
<feature type="repeat" description="1">
    <location>
        <begin position="147"/>
        <end position="152"/>
    </location>
</feature>
<feature type="repeat" description="2">
    <location>
        <begin position="153"/>
        <end position="158"/>
    </location>
</feature>
<feature type="repeat" description="3">
    <location>
        <begin position="159"/>
        <end position="164"/>
    </location>
</feature>
<feature type="repeat" description="4">
    <location>
        <begin position="165"/>
        <end position="170"/>
    </location>
</feature>
<feature type="repeat" description="5">
    <location>
        <begin position="171"/>
        <end position="176"/>
    </location>
</feature>
<feature type="repeat" description="6">
    <location>
        <begin position="177"/>
        <end position="182"/>
    </location>
</feature>
<feature type="repeat" description="7">
    <location>
        <begin position="183"/>
        <end position="188"/>
    </location>
</feature>
<feature type="repeat" description="8">
    <location>
        <begin position="189"/>
        <end position="194"/>
    </location>
</feature>
<feature type="region of interest" description="Disordered" evidence="2">
    <location>
        <begin position="146"/>
        <end position="200"/>
    </location>
</feature>
<feature type="region of interest" description="8 X 6 AA tandem repeat of D-P-C-K-K-K">
    <location>
        <begin position="147"/>
        <end position="194"/>
    </location>
</feature>
<feature type="coiled-coil region" evidence="1">
    <location>
        <begin position="82"/>
        <end position="147"/>
    </location>
</feature>
<feature type="coiled-coil region" evidence="1">
    <location>
        <begin position="197"/>
        <end position="244"/>
    </location>
</feature>
<feature type="splice variant" id="VSP_009364" description="In isoform B." evidence="4">
    <original>MFKRTALILRRCFQPTFIRPHHINVLENFKEADDLPNQG</original>
    <variation>MSLRTLRKG</variation>
    <location>
        <begin position="1"/>
        <end position="39"/>
    </location>
</feature>
<feature type="sequence conflict" description="In Ref. 1; AAC05722." evidence="4" ref="1">
    <original>E</original>
    <variation>D</variation>
    <location>
        <position position="27"/>
    </location>
</feature>
<feature type="sequence conflict" description="In Ref. 1; AAC05722." evidence="4" ref="1">
    <original>G</original>
    <variation>R</variation>
    <location>
        <position position="39"/>
    </location>
</feature>
<organism>
    <name type="scientific">Drosophila melanogaster</name>
    <name type="common">Fruit fly</name>
    <dbReference type="NCBI Taxonomy" id="7227"/>
    <lineage>
        <taxon>Eukaryota</taxon>
        <taxon>Metazoa</taxon>
        <taxon>Ecdysozoa</taxon>
        <taxon>Arthropoda</taxon>
        <taxon>Hexapoda</taxon>
        <taxon>Insecta</taxon>
        <taxon>Pterygota</taxon>
        <taxon>Neoptera</taxon>
        <taxon>Endopterygota</taxon>
        <taxon>Diptera</taxon>
        <taxon>Brachycera</taxon>
        <taxon>Muscomorpha</taxon>
        <taxon>Ephydroidea</taxon>
        <taxon>Drosophilidae</taxon>
        <taxon>Drosophila</taxon>
        <taxon>Sophophora</taxon>
    </lineage>
</organism>
<name>DJ_DROME</name>
<protein>
    <recommendedName>
        <fullName>Sperm-specific protein Don juan</fullName>
    </recommendedName>
</protein>
<keyword id="KW-0025">Alternative splicing</keyword>
<keyword id="KW-0175">Coiled coil</keyword>
<keyword id="KW-0496">Mitochondrion</keyword>
<keyword id="KW-0539">Nucleus</keyword>
<keyword id="KW-1185">Reference proteome</keyword>
<keyword id="KW-0677">Repeat</keyword>
<dbReference type="EMBL" id="U90537">
    <property type="protein sequence ID" value="AAC05722.1"/>
    <property type="molecule type" value="mRNA"/>
</dbReference>
<dbReference type="EMBL" id="AC004266">
    <property type="status" value="NOT_ANNOTATED_CDS"/>
    <property type="molecule type" value="Genomic_DNA"/>
</dbReference>
<dbReference type="EMBL" id="AE014297">
    <property type="protein sequence ID" value="AAF54078.3"/>
    <property type="molecule type" value="Genomic_DNA"/>
</dbReference>
<dbReference type="EMBL" id="AE014297">
    <property type="protein sequence ID" value="AAN13355.2"/>
    <property type="molecule type" value="Genomic_DNA"/>
</dbReference>
<dbReference type="RefSeq" id="NP_477220.3">
    <molecule id="O01352-2"/>
    <property type="nucleotide sequence ID" value="NM_057872.5"/>
</dbReference>
<dbReference type="RefSeq" id="NP_731118.3">
    <molecule id="O01352-1"/>
    <property type="nucleotide sequence ID" value="NM_169163.4"/>
</dbReference>
<dbReference type="SMR" id="O01352"/>
<dbReference type="FunCoup" id="O01352">
    <property type="interactions" value="17"/>
</dbReference>
<dbReference type="IntAct" id="O01352">
    <property type="interactions" value="3"/>
</dbReference>
<dbReference type="MINT" id="O01352"/>
<dbReference type="STRING" id="7227.FBpp0088683"/>
<dbReference type="PaxDb" id="7227-FBpp0088683"/>
<dbReference type="EnsemblMetazoa" id="FBtr0089741">
    <molecule id="O01352-2"/>
    <property type="protein sequence ID" value="FBpp0088682"/>
    <property type="gene ID" value="FBgn0019828"/>
</dbReference>
<dbReference type="EnsemblMetazoa" id="FBtr0089742">
    <molecule id="O01352-1"/>
    <property type="protein sequence ID" value="FBpp0088683"/>
    <property type="gene ID" value="FBgn0019828"/>
</dbReference>
<dbReference type="GeneID" id="40838"/>
<dbReference type="KEGG" id="dme:Dmel_CG1980"/>
<dbReference type="AGR" id="FB:FBgn0019828"/>
<dbReference type="CTD" id="40838"/>
<dbReference type="FlyBase" id="FBgn0019828">
    <property type="gene designation" value="dj"/>
</dbReference>
<dbReference type="VEuPathDB" id="VectorBase:FBgn0019828"/>
<dbReference type="eggNOG" id="ENOG502TBEV">
    <property type="taxonomic scope" value="Eukaryota"/>
</dbReference>
<dbReference type="GeneTree" id="ENSGT00940000169927"/>
<dbReference type="InParanoid" id="O01352"/>
<dbReference type="OMA" id="TFIRPHH"/>
<dbReference type="OrthoDB" id="7870731at2759"/>
<dbReference type="PhylomeDB" id="O01352"/>
<dbReference type="BioGRID-ORCS" id="40838">
    <property type="hits" value="0 hits in 1 CRISPR screen"/>
</dbReference>
<dbReference type="GenomeRNAi" id="40838"/>
<dbReference type="PRO" id="PR:O01352"/>
<dbReference type="Proteomes" id="UP000000803">
    <property type="component" value="Chromosome 3R"/>
</dbReference>
<dbReference type="Bgee" id="FBgn0019828">
    <property type="expression patterns" value="Expressed in early-mid elongation-stage spermatid (Drosophila) in testis and 41 other cell types or tissues"/>
</dbReference>
<dbReference type="ExpressionAtlas" id="O01352">
    <property type="expression patterns" value="baseline and differential"/>
</dbReference>
<dbReference type="GO" id="GO:0005930">
    <property type="term" value="C:axoneme"/>
    <property type="evidence" value="ECO:0000314"/>
    <property type="project" value="FlyBase"/>
</dbReference>
<dbReference type="GO" id="GO:0016007">
    <property type="term" value="C:mitochondrial derivative"/>
    <property type="evidence" value="ECO:0000314"/>
    <property type="project" value="FlyBase"/>
</dbReference>
<dbReference type="GO" id="GO:0005739">
    <property type="term" value="C:mitochondrion"/>
    <property type="evidence" value="ECO:0007669"/>
    <property type="project" value="UniProtKB-SubCell"/>
</dbReference>
<dbReference type="GO" id="GO:0031514">
    <property type="term" value="C:motile cilium"/>
    <property type="evidence" value="ECO:0000314"/>
    <property type="project" value="FlyBase"/>
</dbReference>
<dbReference type="GO" id="GO:0005634">
    <property type="term" value="C:nucleus"/>
    <property type="evidence" value="ECO:0000314"/>
    <property type="project" value="FlyBase"/>
</dbReference>
<dbReference type="GO" id="GO:0007291">
    <property type="term" value="P:sperm individualization"/>
    <property type="evidence" value="ECO:0000270"/>
    <property type="project" value="FlyBase"/>
</dbReference>
<dbReference type="GO" id="GO:0007283">
    <property type="term" value="P:spermatogenesis"/>
    <property type="evidence" value="ECO:0000304"/>
    <property type="project" value="FlyBase"/>
</dbReference>
<proteinExistence type="evidence at transcript level"/>
<evidence type="ECO:0000255" key="1"/>
<evidence type="ECO:0000256" key="2">
    <source>
        <dbReference type="SAM" id="MobiDB-lite"/>
    </source>
</evidence>
<evidence type="ECO:0000269" key="3">
    <source>
    </source>
</evidence>
<evidence type="ECO:0000305" key="4"/>
<reference key="1">
    <citation type="journal article" date="1997" name="Mech. Dev.">
        <title>The Drosophila don juan (dj) gene encodes a novel sperm specific protein component characterized by an unusual domain of a repetitive amino acid motif.</title>
        <authorList>
            <person name="Santel A."/>
            <person name="Winhauer T."/>
            <person name="Bluemer N."/>
            <person name="Renkawitz-Pohl R."/>
        </authorList>
    </citation>
    <scope>NUCLEOTIDE SEQUENCE [MRNA] (ISOFORM A)</scope>
</reference>
<reference key="2">
    <citation type="submission" date="1998-03" db="EMBL/GenBank/DDBJ databases">
        <title>Sequencing of ANT-C antennapedia complex.</title>
        <authorList>
            <person name="Celniker S.E."/>
            <person name="George R.A."/>
            <person name="Galle R."/>
            <person name="Svirskas R.R."/>
            <person name="Hoskins R.A."/>
            <person name="Agbayani A."/>
            <person name="Arcaina T.T."/>
            <person name="Baxter E."/>
            <person name="Blazej R.G."/>
            <person name="Chavez C."/>
            <person name="Chew M."/>
            <person name="Doyle C.M."/>
            <person name="Farfan D.E."/>
            <person name="Flanagan J."/>
            <person name="Houston K.A."/>
            <person name="Hummasti S.R."/>
            <person name="Karra K."/>
            <person name="Kearney L."/>
            <person name="Kim S.H."/>
            <person name="Lee B."/>
            <person name="Lomotan M.A."/>
            <person name="Mak J."/>
            <person name="Mazda P."/>
            <person name="Mok M.S."/>
            <person name="Moshrefi A.R."/>
            <person name="Moshrefi M."/>
            <person name="Nixon K."/>
            <person name="Pacleb J.M."/>
            <person name="Park S."/>
            <person name="Pfeiffer B."/>
            <person name="Punch E."/>
            <person name="Snir E."/>
            <person name="Twomey B."/>
            <person name="Wan K.H."/>
            <person name="Whitelaw K.R."/>
            <person name="Yee A."/>
            <person name="Zhang R."/>
            <person name="Zieran L.L."/>
            <person name="Kimmel B.E."/>
        </authorList>
    </citation>
    <scope>NUCLEOTIDE SEQUENCE (ISOFORM A)</scope>
    <source>
        <strain>Berkeley</strain>
    </source>
</reference>
<reference key="3">
    <citation type="journal article" date="2000" name="Science">
        <title>The genome sequence of Drosophila melanogaster.</title>
        <authorList>
            <person name="Adams M.D."/>
            <person name="Celniker S.E."/>
            <person name="Holt R.A."/>
            <person name="Evans C.A."/>
            <person name="Gocayne J.D."/>
            <person name="Amanatides P.G."/>
            <person name="Scherer S.E."/>
            <person name="Li P.W."/>
            <person name="Hoskins R.A."/>
            <person name="Galle R.F."/>
            <person name="George R.A."/>
            <person name="Lewis S.E."/>
            <person name="Richards S."/>
            <person name="Ashburner M."/>
            <person name="Henderson S.N."/>
            <person name="Sutton G.G."/>
            <person name="Wortman J.R."/>
            <person name="Yandell M.D."/>
            <person name="Zhang Q."/>
            <person name="Chen L.X."/>
            <person name="Brandon R.C."/>
            <person name="Rogers Y.-H.C."/>
            <person name="Blazej R.G."/>
            <person name="Champe M."/>
            <person name="Pfeiffer B.D."/>
            <person name="Wan K.H."/>
            <person name="Doyle C."/>
            <person name="Baxter E.G."/>
            <person name="Helt G."/>
            <person name="Nelson C.R."/>
            <person name="Miklos G.L.G."/>
            <person name="Abril J.F."/>
            <person name="Agbayani A."/>
            <person name="An H.-J."/>
            <person name="Andrews-Pfannkoch C."/>
            <person name="Baldwin D."/>
            <person name="Ballew R.M."/>
            <person name="Basu A."/>
            <person name="Baxendale J."/>
            <person name="Bayraktaroglu L."/>
            <person name="Beasley E.M."/>
            <person name="Beeson K.Y."/>
            <person name="Benos P.V."/>
            <person name="Berman B.P."/>
            <person name="Bhandari D."/>
            <person name="Bolshakov S."/>
            <person name="Borkova D."/>
            <person name="Botchan M.R."/>
            <person name="Bouck J."/>
            <person name="Brokstein P."/>
            <person name="Brottier P."/>
            <person name="Burtis K.C."/>
            <person name="Busam D.A."/>
            <person name="Butler H."/>
            <person name="Cadieu E."/>
            <person name="Center A."/>
            <person name="Chandra I."/>
            <person name="Cherry J.M."/>
            <person name="Cawley S."/>
            <person name="Dahlke C."/>
            <person name="Davenport L.B."/>
            <person name="Davies P."/>
            <person name="de Pablos B."/>
            <person name="Delcher A."/>
            <person name="Deng Z."/>
            <person name="Mays A.D."/>
            <person name="Dew I."/>
            <person name="Dietz S.M."/>
            <person name="Dodson K."/>
            <person name="Doup L.E."/>
            <person name="Downes M."/>
            <person name="Dugan-Rocha S."/>
            <person name="Dunkov B.C."/>
            <person name="Dunn P."/>
            <person name="Durbin K.J."/>
            <person name="Evangelista C.C."/>
            <person name="Ferraz C."/>
            <person name="Ferriera S."/>
            <person name="Fleischmann W."/>
            <person name="Fosler C."/>
            <person name="Gabrielian A.E."/>
            <person name="Garg N.S."/>
            <person name="Gelbart W.M."/>
            <person name="Glasser K."/>
            <person name="Glodek A."/>
            <person name="Gong F."/>
            <person name="Gorrell J.H."/>
            <person name="Gu Z."/>
            <person name="Guan P."/>
            <person name="Harris M."/>
            <person name="Harris N.L."/>
            <person name="Harvey D.A."/>
            <person name="Heiman T.J."/>
            <person name="Hernandez J.R."/>
            <person name="Houck J."/>
            <person name="Hostin D."/>
            <person name="Houston K.A."/>
            <person name="Howland T.J."/>
            <person name="Wei M.-H."/>
            <person name="Ibegwam C."/>
            <person name="Jalali M."/>
            <person name="Kalush F."/>
            <person name="Karpen G.H."/>
            <person name="Ke Z."/>
            <person name="Kennison J.A."/>
            <person name="Ketchum K.A."/>
            <person name="Kimmel B.E."/>
            <person name="Kodira C.D."/>
            <person name="Kraft C.L."/>
            <person name="Kravitz S."/>
            <person name="Kulp D."/>
            <person name="Lai Z."/>
            <person name="Lasko P."/>
            <person name="Lei Y."/>
            <person name="Levitsky A.A."/>
            <person name="Li J.H."/>
            <person name="Li Z."/>
            <person name="Liang Y."/>
            <person name="Lin X."/>
            <person name="Liu X."/>
            <person name="Mattei B."/>
            <person name="McIntosh T.C."/>
            <person name="McLeod M.P."/>
            <person name="McPherson D."/>
            <person name="Merkulov G."/>
            <person name="Milshina N.V."/>
            <person name="Mobarry C."/>
            <person name="Morris J."/>
            <person name="Moshrefi A."/>
            <person name="Mount S.M."/>
            <person name="Moy M."/>
            <person name="Murphy B."/>
            <person name="Murphy L."/>
            <person name="Muzny D.M."/>
            <person name="Nelson D.L."/>
            <person name="Nelson D.R."/>
            <person name="Nelson K.A."/>
            <person name="Nixon K."/>
            <person name="Nusskern D.R."/>
            <person name="Pacleb J.M."/>
            <person name="Palazzolo M."/>
            <person name="Pittman G.S."/>
            <person name="Pan S."/>
            <person name="Pollard J."/>
            <person name="Puri V."/>
            <person name="Reese M.G."/>
            <person name="Reinert K."/>
            <person name="Remington K."/>
            <person name="Saunders R.D.C."/>
            <person name="Scheeler F."/>
            <person name="Shen H."/>
            <person name="Shue B.C."/>
            <person name="Siden-Kiamos I."/>
            <person name="Simpson M."/>
            <person name="Skupski M.P."/>
            <person name="Smith T.J."/>
            <person name="Spier E."/>
            <person name="Spradling A.C."/>
            <person name="Stapleton M."/>
            <person name="Strong R."/>
            <person name="Sun E."/>
            <person name="Svirskas R."/>
            <person name="Tector C."/>
            <person name="Turner R."/>
            <person name="Venter E."/>
            <person name="Wang A.H."/>
            <person name="Wang X."/>
            <person name="Wang Z.-Y."/>
            <person name="Wassarman D.A."/>
            <person name="Weinstock G.M."/>
            <person name="Weissenbach J."/>
            <person name="Williams S.M."/>
            <person name="Woodage T."/>
            <person name="Worley K.C."/>
            <person name="Wu D."/>
            <person name="Yang S."/>
            <person name="Yao Q.A."/>
            <person name="Ye J."/>
            <person name="Yeh R.-F."/>
            <person name="Zaveri J.S."/>
            <person name="Zhan M."/>
            <person name="Zhang G."/>
            <person name="Zhao Q."/>
            <person name="Zheng L."/>
            <person name="Zheng X.H."/>
            <person name="Zhong F.N."/>
            <person name="Zhong W."/>
            <person name="Zhou X."/>
            <person name="Zhu S.C."/>
            <person name="Zhu X."/>
            <person name="Smith H.O."/>
            <person name="Gibbs R.A."/>
            <person name="Myers E.W."/>
            <person name="Rubin G.M."/>
            <person name="Venter J.C."/>
        </authorList>
    </citation>
    <scope>NUCLEOTIDE SEQUENCE [LARGE SCALE GENOMIC DNA]</scope>
    <source>
        <strain>Berkeley</strain>
    </source>
</reference>
<reference key="4">
    <citation type="journal article" date="2002" name="Genome Biol.">
        <title>Annotation of the Drosophila melanogaster euchromatic genome: a systematic review.</title>
        <authorList>
            <person name="Misra S."/>
            <person name="Crosby M.A."/>
            <person name="Mungall C.J."/>
            <person name="Matthews B.B."/>
            <person name="Campbell K.S."/>
            <person name="Hradecky P."/>
            <person name="Huang Y."/>
            <person name="Kaminker J.S."/>
            <person name="Millburn G.H."/>
            <person name="Prochnik S.E."/>
            <person name="Smith C.D."/>
            <person name="Tupy J.L."/>
            <person name="Whitfield E.J."/>
            <person name="Bayraktaroglu L."/>
            <person name="Berman B.P."/>
            <person name="Bettencourt B.R."/>
            <person name="Celniker S.E."/>
            <person name="de Grey A.D.N.J."/>
            <person name="Drysdale R.A."/>
            <person name="Harris N.L."/>
            <person name="Richter J."/>
            <person name="Russo S."/>
            <person name="Schroeder A.J."/>
            <person name="Shu S.Q."/>
            <person name="Stapleton M."/>
            <person name="Yamada C."/>
            <person name="Ashburner M."/>
            <person name="Gelbart W.M."/>
            <person name="Rubin G.M."/>
            <person name="Lewis S.E."/>
        </authorList>
    </citation>
    <scope>GENOME REANNOTATION</scope>
    <scope>ALTERNATIVE SPLICING</scope>
    <source>
        <strain>Berkeley</strain>
    </source>
</reference>
<reference key="5">
    <citation type="journal article" date="1998" name="J. Cell Sci.">
        <title>Flagellar mitochondrial association of the male-specific Don Juan protein in Drosophila spermatozoa.</title>
        <authorList>
            <person name="Santel A."/>
            <person name="Bluemer N."/>
            <person name="Kaempfer M."/>
            <person name="Renkawitz-Pohl R."/>
        </authorList>
    </citation>
    <scope>SUBCELLULAR LOCATION</scope>
    <scope>TISSUE SPECIFICITY</scope>
</reference>
<gene>
    <name type="primary">dj</name>
    <name type="ORF">CG1980</name>
</gene>
<sequence>MFKRTALILRRCFQPTFIRPHHINVLENFKEADDLPNQGQAKFVDVSIHDPQHIRSALVSPMQRKFLQDLEQQQTVRIKWFKEGNQDELENMKNECRRLALEIIMAAKGGDIKKACKELAEKEKCKQIELKKKCKELEKKTKCAKKDPCKKKDPCKKKDPCKKKDPCKKKDPCKKKDPCKKKDPCKKKDPCKKKGGDLKKKCKKLAEKEKCKKLAKKEKMKKLQKKCKKMAQKEKCKKMAKKDKCKKK</sequence>